<accession>Q9M0M2</accession>
<accession>F4JQQ3</accession>
<accession>Q9SVW6</accession>
<keyword id="KW-0067">ATP-binding</keyword>
<keyword id="KW-0325">Glycoprotein</keyword>
<keyword id="KW-0472">Membrane</keyword>
<keyword id="KW-0547">Nucleotide-binding</keyword>
<keyword id="KW-1185">Reference proteome</keyword>
<keyword id="KW-0677">Repeat</keyword>
<keyword id="KW-0812">Transmembrane</keyword>
<keyword id="KW-1133">Transmembrane helix</keyword>
<keyword id="KW-0813">Transport</keyword>
<evidence type="ECO:0000255" key="1"/>
<evidence type="ECO:0000255" key="2">
    <source>
        <dbReference type="PROSITE-ProRule" id="PRU00434"/>
    </source>
</evidence>
<evidence type="ECO:0000255" key="3">
    <source>
        <dbReference type="PROSITE-ProRule" id="PRU00441"/>
    </source>
</evidence>
<evidence type="ECO:0000256" key="4">
    <source>
        <dbReference type="SAM" id="MobiDB-lite"/>
    </source>
</evidence>
<evidence type="ECO:0000305" key="5"/>
<protein>
    <recommendedName>
        <fullName>ABC transporter B family member 9</fullName>
        <shortName>ABC transporter ABCB.9</shortName>
        <shortName>AtABCB9</shortName>
    </recommendedName>
    <alternativeName>
        <fullName>Multidrug resistance protein 9</fullName>
    </alternativeName>
    <alternativeName>
        <fullName>P-glycoprotein 9</fullName>
    </alternativeName>
</protein>
<reference key="1">
    <citation type="journal article" date="1999" name="Nature">
        <title>Sequence and analysis of chromosome 4 of the plant Arabidopsis thaliana.</title>
        <authorList>
            <person name="Mayer K.F.X."/>
            <person name="Schueller C."/>
            <person name="Wambutt R."/>
            <person name="Murphy G."/>
            <person name="Volckaert G."/>
            <person name="Pohl T."/>
            <person name="Duesterhoeft A."/>
            <person name="Stiekema W."/>
            <person name="Entian K.-D."/>
            <person name="Terryn N."/>
            <person name="Harris B."/>
            <person name="Ansorge W."/>
            <person name="Brandt P."/>
            <person name="Grivell L.A."/>
            <person name="Rieger M."/>
            <person name="Weichselgartner M."/>
            <person name="de Simone V."/>
            <person name="Obermaier B."/>
            <person name="Mache R."/>
            <person name="Mueller M."/>
            <person name="Kreis M."/>
            <person name="Delseny M."/>
            <person name="Puigdomenech P."/>
            <person name="Watson M."/>
            <person name="Schmidtheini T."/>
            <person name="Reichert B."/>
            <person name="Portetelle D."/>
            <person name="Perez-Alonso M."/>
            <person name="Boutry M."/>
            <person name="Bancroft I."/>
            <person name="Vos P."/>
            <person name="Hoheisel J."/>
            <person name="Zimmermann W."/>
            <person name="Wedler H."/>
            <person name="Ridley P."/>
            <person name="Langham S.-A."/>
            <person name="McCullagh B."/>
            <person name="Bilham L."/>
            <person name="Robben J."/>
            <person name="van der Schueren J."/>
            <person name="Grymonprez B."/>
            <person name="Chuang Y.-J."/>
            <person name="Vandenbussche F."/>
            <person name="Braeken M."/>
            <person name="Weltjens I."/>
            <person name="Voet M."/>
            <person name="Bastiaens I."/>
            <person name="Aert R."/>
            <person name="Defoor E."/>
            <person name="Weitzenegger T."/>
            <person name="Bothe G."/>
            <person name="Ramsperger U."/>
            <person name="Hilbert H."/>
            <person name="Braun M."/>
            <person name="Holzer E."/>
            <person name="Brandt A."/>
            <person name="Peters S."/>
            <person name="van Staveren M."/>
            <person name="Dirkse W."/>
            <person name="Mooijman P."/>
            <person name="Klein Lankhorst R."/>
            <person name="Rose M."/>
            <person name="Hauf J."/>
            <person name="Koetter P."/>
            <person name="Berneiser S."/>
            <person name="Hempel S."/>
            <person name="Feldpausch M."/>
            <person name="Lamberth S."/>
            <person name="Van den Daele H."/>
            <person name="De Keyser A."/>
            <person name="Buysshaert C."/>
            <person name="Gielen J."/>
            <person name="Villarroel R."/>
            <person name="De Clercq R."/>
            <person name="van Montagu M."/>
            <person name="Rogers J."/>
            <person name="Cronin A."/>
            <person name="Quail M.A."/>
            <person name="Bray-Allen S."/>
            <person name="Clark L."/>
            <person name="Doggett J."/>
            <person name="Hall S."/>
            <person name="Kay M."/>
            <person name="Lennard N."/>
            <person name="McLay K."/>
            <person name="Mayes R."/>
            <person name="Pettett A."/>
            <person name="Rajandream M.A."/>
            <person name="Lyne M."/>
            <person name="Benes V."/>
            <person name="Rechmann S."/>
            <person name="Borkova D."/>
            <person name="Bloecker H."/>
            <person name="Scharfe M."/>
            <person name="Grimm M."/>
            <person name="Loehnert T.-H."/>
            <person name="Dose S."/>
            <person name="de Haan M."/>
            <person name="Maarse A.C."/>
            <person name="Schaefer M."/>
            <person name="Mueller-Auer S."/>
            <person name="Gabel C."/>
            <person name="Fuchs M."/>
            <person name="Fartmann B."/>
            <person name="Granderath K."/>
            <person name="Dauner D."/>
            <person name="Herzl A."/>
            <person name="Neumann S."/>
            <person name="Argiriou A."/>
            <person name="Vitale D."/>
            <person name="Liguori R."/>
            <person name="Piravandi E."/>
            <person name="Massenet O."/>
            <person name="Quigley F."/>
            <person name="Clabauld G."/>
            <person name="Muendlein A."/>
            <person name="Felber R."/>
            <person name="Schnabl S."/>
            <person name="Hiller R."/>
            <person name="Schmidt W."/>
            <person name="Lecharny A."/>
            <person name="Aubourg S."/>
            <person name="Chefdor F."/>
            <person name="Cooke R."/>
            <person name="Berger C."/>
            <person name="Monfort A."/>
            <person name="Casacuberta E."/>
            <person name="Gibbons T."/>
            <person name="Weber N."/>
            <person name="Vandenbol M."/>
            <person name="Bargues M."/>
            <person name="Terol J."/>
            <person name="Torres A."/>
            <person name="Perez-Perez A."/>
            <person name="Purnelle B."/>
            <person name="Bent E."/>
            <person name="Johnson S."/>
            <person name="Tacon D."/>
            <person name="Jesse T."/>
            <person name="Heijnen L."/>
            <person name="Schwarz S."/>
            <person name="Scholler P."/>
            <person name="Heber S."/>
            <person name="Francs P."/>
            <person name="Bielke C."/>
            <person name="Frishman D."/>
            <person name="Haase D."/>
            <person name="Lemcke K."/>
            <person name="Mewes H.-W."/>
            <person name="Stocker S."/>
            <person name="Zaccaria P."/>
            <person name="Bevan M."/>
            <person name="Wilson R.K."/>
            <person name="de la Bastide M."/>
            <person name="Habermann K."/>
            <person name="Parnell L."/>
            <person name="Dedhia N."/>
            <person name="Gnoj L."/>
            <person name="Schutz K."/>
            <person name="Huang E."/>
            <person name="Spiegel L."/>
            <person name="Sekhon M."/>
            <person name="Murray J."/>
            <person name="Sheet P."/>
            <person name="Cordes M."/>
            <person name="Abu-Threideh J."/>
            <person name="Stoneking T."/>
            <person name="Kalicki J."/>
            <person name="Graves T."/>
            <person name="Harmon G."/>
            <person name="Edwards J."/>
            <person name="Latreille P."/>
            <person name="Courtney L."/>
            <person name="Cloud J."/>
            <person name="Abbott A."/>
            <person name="Scott K."/>
            <person name="Johnson D."/>
            <person name="Minx P."/>
            <person name="Bentley D."/>
            <person name="Fulton B."/>
            <person name="Miller N."/>
            <person name="Greco T."/>
            <person name="Kemp K."/>
            <person name="Kramer J."/>
            <person name="Fulton L."/>
            <person name="Mardis E."/>
            <person name="Dante M."/>
            <person name="Pepin K."/>
            <person name="Hillier L.W."/>
            <person name="Nelson J."/>
            <person name="Spieth J."/>
            <person name="Ryan E."/>
            <person name="Andrews S."/>
            <person name="Geisel C."/>
            <person name="Layman D."/>
            <person name="Du H."/>
            <person name="Ali J."/>
            <person name="Berghoff A."/>
            <person name="Jones K."/>
            <person name="Drone K."/>
            <person name="Cotton M."/>
            <person name="Joshu C."/>
            <person name="Antonoiu B."/>
            <person name="Zidanic M."/>
            <person name="Strong C."/>
            <person name="Sun H."/>
            <person name="Lamar B."/>
            <person name="Yordan C."/>
            <person name="Ma P."/>
            <person name="Zhong J."/>
            <person name="Preston R."/>
            <person name="Vil D."/>
            <person name="Shekher M."/>
            <person name="Matero A."/>
            <person name="Shah R."/>
            <person name="Swaby I.K."/>
            <person name="O'Shaughnessy A."/>
            <person name="Rodriguez M."/>
            <person name="Hoffman J."/>
            <person name="Till S."/>
            <person name="Granat S."/>
            <person name="Shohdy N."/>
            <person name="Hasegawa A."/>
            <person name="Hameed A."/>
            <person name="Lodhi M."/>
            <person name="Johnson A."/>
            <person name="Chen E."/>
            <person name="Marra M.A."/>
            <person name="Martienssen R."/>
            <person name="McCombie W.R."/>
        </authorList>
    </citation>
    <scope>NUCLEOTIDE SEQUENCE [LARGE SCALE GENOMIC DNA]</scope>
    <source>
        <strain>cv. Columbia</strain>
    </source>
</reference>
<reference key="2">
    <citation type="journal article" date="2017" name="Plant J.">
        <title>Araport11: a complete reannotation of the Arabidopsis thaliana reference genome.</title>
        <authorList>
            <person name="Cheng C.Y."/>
            <person name="Krishnakumar V."/>
            <person name="Chan A.P."/>
            <person name="Thibaud-Nissen F."/>
            <person name="Schobel S."/>
            <person name="Town C.D."/>
        </authorList>
    </citation>
    <scope>GENOME REANNOTATION</scope>
    <source>
        <strain>cv. Columbia</strain>
    </source>
</reference>
<reference key="3">
    <citation type="journal article" date="2001" name="J. Biol. Chem.">
        <title>The Arabidopsis thaliana ABC protein superfamily, a complete inventory.</title>
        <authorList>
            <person name="Sanchez-Fernandez R."/>
            <person name="Davies T.G."/>
            <person name="Coleman J.O."/>
            <person name="Rea P.A."/>
        </authorList>
    </citation>
    <scope>GENE FAMILY</scope>
    <scope>NOMENCLATURE</scope>
</reference>
<reference key="4">
    <citation type="journal article" date="2008" name="Trends Plant Sci.">
        <title>Plant ABC proteins - a unified nomenclature and updated inventory.</title>
        <authorList>
            <person name="Verrier P.J."/>
            <person name="Bird D."/>
            <person name="Burla B."/>
            <person name="Dassa E."/>
            <person name="Forestier C."/>
            <person name="Geisler M."/>
            <person name="Klein M."/>
            <person name="Kolukisaoglu H.U."/>
            <person name="Lee Y."/>
            <person name="Martinoia E."/>
            <person name="Murphy A."/>
            <person name="Rea P.A."/>
            <person name="Samuels L."/>
            <person name="Schulz B."/>
            <person name="Spalding E.J."/>
            <person name="Yazaki K."/>
            <person name="Theodoulou F.L."/>
        </authorList>
    </citation>
    <scope>GENE FAMILY</scope>
    <scope>NOMENCLATURE</scope>
</reference>
<proteinExistence type="inferred from homology"/>
<gene>
    <name type="primary">ABCB9</name>
    <name type="synonym">MDR9</name>
    <name type="synonym">PGP9</name>
    <name type="ordered locus">At4g18050</name>
    <name type="ORF">F15J5.20</name>
</gene>
<feature type="chain" id="PRO_0000227920" description="ABC transporter B family member 9">
    <location>
        <begin position="1"/>
        <end position="1236"/>
    </location>
</feature>
<feature type="transmembrane region" description="Helical" evidence="3">
    <location>
        <begin position="38"/>
        <end position="58"/>
    </location>
</feature>
<feature type="transmembrane region" description="Helical" evidence="3">
    <location>
        <begin position="80"/>
        <end position="100"/>
    </location>
</feature>
<feature type="transmembrane region" description="Helical" evidence="3">
    <location>
        <begin position="158"/>
        <end position="178"/>
    </location>
</feature>
<feature type="transmembrane region" description="Helical" evidence="3">
    <location>
        <begin position="179"/>
        <end position="199"/>
    </location>
</feature>
<feature type="transmembrane region" description="Helical" evidence="3">
    <location>
        <begin position="257"/>
        <end position="277"/>
    </location>
</feature>
<feature type="transmembrane region" description="Helical" evidence="3">
    <location>
        <begin position="288"/>
        <end position="308"/>
    </location>
</feature>
<feature type="transmembrane region" description="Helical" evidence="3">
    <location>
        <begin position="685"/>
        <end position="705"/>
    </location>
</feature>
<feature type="transmembrane region" description="Helical" evidence="3">
    <location>
        <begin position="725"/>
        <end position="745"/>
    </location>
</feature>
<feature type="transmembrane region" description="Helical" evidence="3">
    <location>
        <begin position="785"/>
        <end position="805"/>
    </location>
</feature>
<feature type="transmembrane region" description="Helical" evidence="3">
    <location>
        <begin position="806"/>
        <end position="826"/>
    </location>
</feature>
<feature type="transmembrane region" description="Helical" evidence="3">
    <location>
        <begin position="902"/>
        <end position="922"/>
    </location>
</feature>
<feature type="transmembrane region" description="Helical" evidence="3">
    <location>
        <begin position="927"/>
        <end position="947"/>
    </location>
</feature>
<feature type="domain" description="ABC transmembrane type-1 1" evidence="3">
    <location>
        <begin position="33"/>
        <end position="320"/>
    </location>
</feature>
<feature type="domain" description="ABC transporter 1" evidence="2">
    <location>
        <begin position="355"/>
        <end position="591"/>
    </location>
</feature>
<feature type="domain" description="ABC transmembrane type-1 2" evidence="3">
    <location>
        <begin position="686"/>
        <end position="958"/>
    </location>
</feature>
<feature type="domain" description="ABC transporter 2" evidence="2">
    <location>
        <begin position="993"/>
        <end position="1230"/>
    </location>
</feature>
<feature type="region of interest" description="Disordered" evidence="4">
    <location>
        <begin position="593"/>
        <end position="616"/>
    </location>
</feature>
<feature type="compositionally biased region" description="Basic and acidic residues" evidence="4">
    <location>
        <begin position="594"/>
        <end position="616"/>
    </location>
</feature>
<feature type="binding site" evidence="2">
    <location>
        <begin position="390"/>
        <end position="397"/>
    </location>
    <ligand>
        <name>ATP</name>
        <dbReference type="ChEBI" id="CHEBI:30616"/>
    </ligand>
</feature>
<feature type="binding site" evidence="2">
    <location>
        <begin position="1028"/>
        <end position="1035"/>
    </location>
    <ligand>
        <name>ATP</name>
        <dbReference type="ChEBI" id="CHEBI:30616"/>
    </ligand>
</feature>
<feature type="glycosylation site" description="N-linked (GlcNAc...) asparagine" evidence="1">
    <location>
        <position position="542"/>
    </location>
</feature>
<feature type="glycosylation site" description="N-linked (GlcNAc...) asparagine" evidence="1">
    <location>
        <position position="631"/>
    </location>
</feature>
<feature type="glycosylation site" description="N-linked (GlcNAc...) asparagine" evidence="1">
    <location>
        <position position="653"/>
    </location>
</feature>
<feature type="glycosylation site" description="N-linked (GlcNAc...) asparagine" evidence="1">
    <location>
        <position position="1082"/>
    </location>
</feature>
<feature type="glycosylation site" description="N-linked (GlcNAc...) asparagine" evidence="1">
    <location>
        <position position="1181"/>
    </location>
</feature>
<feature type="sequence conflict" description="In Ref. 1; CAB53646/CAB78807." evidence="5" ref="1">
    <original>Q</original>
    <variation>P</variation>
    <location>
        <position position="746"/>
    </location>
</feature>
<sequence length="1236" mass="134366">MEEKSSKKNDGGNQKVSFFKLFSFADKTDVVLMTVGTIAAAGNGLTQPFMTLIFGQLINAFGTTDPDHMVREVWKVAVKFIYLAVYSCVVAFLQVSCWMVTGERQSATIRGLYLKTILRQDIGYFDTETNTGEVIGRMSGDTILIQDAMGEKVGKFTQLLCTFLGGFAIAFYKGPLLAGVLCSCIPLIVIAGAAMSLIMSKMAGRGQVAYAEAGNVVEQTVGAIRTVVAFTGEKQATEKYESKLEIAYKTVVQQGLISGFGLGTMLAVIFCSYGLAVWYGAKLIMEKGYNGGQVINVIFAVLTGGMSLGQTSPSLNAFAAGRAAAFKMFETIKRSPKIDAYDMSGSVLEDIRGDIELKDVYFRYPARPDVQIFAGFSLFVPNGKTVALVGQSGSGKSTVISLIERFYDPESGQVLIDNIDLKKLQLKWIRSKIGLVSQEPVLFATTIKENIAYGKEDATDQEIRTAIELANAAKFIDKLPQGLDTMVGEHGTQMSGGQKQRLAIARAILKNPKILLLDEATSALDAESERIVQDALVNLMSNRTTVVVAHRLTTIRTADVIAVVHQGKIVEKGTHDEMIQDPEGAYSQLVRLQEGSKEEATESERPETSLDVERSGSLRLSSAMRRSVSRNSSSSRHSFSLASNMFFPGVNVNQTDEMEDEENNVRHKKVSLKRLAHLNKPEIPVLVLGSIAAMVHGTVFPIFGLLLSSSINMFYEPAKILKKDSHFWALIYIALGLTNFVMIPVQNYFFGIAGGKLIKRIRSMCFDKVVHQEISWFDDTANSRSLVGDALALIVQNIATVTTGLIIAFTANWILALIVLALSPFIVIQGYAQTKFLTGFSADAKAMYEEASQVANDAVSSIRTVASFCAEEKVMDLYQQKCDGPKKNGVRLGLLSGAGFGFSFFFLYCINCVCFVSGAGLIQIGKATFGEVFKVFFALTIMAIGVSQTSAMAPDSNKAKDSAASIFDILDSTPKIDSSSDEGTTLQNVNGDIEFRHVSFRYPMRPDVQIFRDLCLTIPSGKTVALVGESGSGKSTVISMIERFYNPDSGKILIDQVEIQTFKLSWLRQQMGLVSQEPILFNETIRSNIAYGKTGGATEEEIIAAAKAANAHNFISSLPQGYDTSVGERGVQLSGGQKQRIAIARAILKDPKILLLDEATSALDAESERVVQDALDRVMVNRTTVVVAHRLTTIKNADVIAVVKNGVIAEKGRHETLMKISGGAYASLVTLHMSAN</sequence>
<dbReference type="EMBL" id="AL110123">
    <property type="protein sequence ID" value="CAB53646.1"/>
    <property type="status" value="ALT_SEQ"/>
    <property type="molecule type" value="Genomic_DNA"/>
</dbReference>
<dbReference type="EMBL" id="AL161547">
    <property type="protein sequence ID" value="CAB78807.1"/>
    <property type="status" value="ALT_SEQ"/>
    <property type="molecule type" value="Genomic_DNA"/>
</dbReference>
<dbReference type="EMBL" id="CP002687">
    <property type="protein sequence ID" value="AEE83988.1"/>
    <property type="molecule type" value="Genomic_DNA"/>
</dbReference>
<dbReference type="PIR" id="H85202">
    <property type="entry name" value="H85202"/>
</dbReference>
<dbReference type="PIR" id="T14805">
    <property type="entry name" value="T14805"/>
</dbReference>
<dbReference type="RefSeq" id="NP_193539.6">
    <property type="nucleotide sequence ID" value="NM_117915.7"/>
</dbReference>
<dbReference type="SMR" id="Q9M0M2"/>
<dbReference type="FunCoup" id="Q9M0M2">
    <property type="interactions" value="309"/>
</dbReference>
<dbReference type="STRING" id="3702.Q9M0M2"/>
<dbReference type="GlyCosmos" id="Q9M0M2">
    <property type="glycosylation" value="5 sites, No reported glycans"/>
</dbReference>
<dbReference type="GlyGen" id="Q9M0M2">
    <property type="glycosylation" value="5 sites"/>
</dbReference>
<dbReference type="PaxDb" id="3702-AT4G18050.1"/>
<dbReference type="ProteomicsDB" id="244632"/>
<dbReference type="EnsemblPlants" id="AT4G18050.1">
    <property type="protein sequence ID" value="AT4G18050.1"/>
    <property type="gene ID" value="AT4G18050"/>
</dbReference>
<dbReference type="GeneID" id="827530"/>
<dbReference type="Gramene" id="AT4G18050.1">
    <property type="protein sequence ID" value="AT4G18050.1"/>
    <property type="gene ID" value="AT4G18050"/>
</dbReference>
<dbReference type="KEGG" id="ath:AT4G18050"/>
<dbReference type="Araport" id="AT4G18050"/>
<dbReference type="TAIR" id="AT4G18050">
    <property type="gene designation" value="ABCB9"/>
</dbReference>
<dbReference type="eggNOG" id="KOG0055">
    <property type="taxonomic scope" value="Eukaryota"/>
</dbReference>
<dbReference type="HOGENOM" id="CLU_000604_17_2_1"/>
<dbReference type="InParanoid" id="Q9M0M2"/>
<dbReference type="OMA" id="GYFRLAM"/>
<dbReference type="PRO" id="PR:Q9M0M2"/>
<dbReference type="Proteomes" id="UP000006548">
    <property type="component" value="Chromosome 4"/>
</dbReference>
<dbReference type="ExpressionAtlas" id="Q9M0M2">
    <property type="expression patterns" value="baseline and differential"/>
</dbReference>
<dbReference type="GO" id="GO:0005829">
    <property type="term" value="C:cytosol"/>
    <property type="evidence" value="ECO:0007005"/>
    <property type="project" value="TAIR"/>
</dbReference>
<dbReference type="GO" id="GO:0016020">
    <property type="term" value="C:membrane"/>
    <property type="evidence" value="ECO:0007669"/>
    <property type="project" value="UniProtKB-SubCell"/>
</dbReference>
<dbReference type="GO" id="GO:0140359">
    <property type="term" value="F:ABC-type transporter activity"/>
    <property type="evidence" value="ECO:0007669"/>
    <property type="project" value="InterPro"/>
</dbReference>
<dbReference type="GO" id="GO:0005524">
    <property type="term" value="F:ATP binding"/>
    <property type="evidence" value="ECO:0007669"/>
    <property type="project" value="UniProtKB-KW"/>
</dbReference>
<dbReference type="GO" id="GO:0016887">
    <property type="term" value="F:ATP hydrolysis activity"/>
    <property type="evidence" value="ECO:0007669"/>
    <property type="project" value="InterPro"/>
</dbReference>
<dbReference type="CDD" id="cd18577">
    <property type="entry name" value="ABC_6TM_Pgp_ABCB1_D1_like"/>
    <property type="match status" value="1"/>
</dbReference>
<dbReference type="CDD" id="cd18578">
    <property type="entry name" value="ABC_6TM_Pgp_ABCB1_D2_like"/>
    <property type="match status" value="1"/>
</dbReference>
<dbReference type="CDD" id="cd03249">
    <property type="entry name" value="ABC_MTABC3_MDL1_MDL2"/>
    <property type="match status" value="2"/>
</dbReference>
<dbReference type="FunFam" id="1.20.1560.10:FF:000009">
    <property type="entry name" value="ABC transporter B family member 1"/>
    <property type="match status" value="1"/>
</dbReference>
<dbReference type="FunFam" id="3.40.50.300:FF:000066">
    <property type="entry name" value="ABC transporter B family member 1"/>
    <property type="match status" value="2"/>
</dbReference>
<dbReference type="FunFam" id="1.20.1560.10:FF:000044">
    <property type="entry name" value="ABC transporter B family member 9"/>
    <property type="match status" value="1"/>
</dbReference>
<dbReference type="Gene3D" id="1.20.1560.10">
    <property type="entry name" value="ABC transporter type 1, transmembrane domain"/>
    <property type="match status" value="2"/>
</dbReference>
<dbReference type="Gene3D" id="3.40.50.300">
    <property type="entry name" value="P-loop containing nucleotide triphosphate hydrolases"/>
    <property type="match status" value="2"/>
</dbReference>
<dbReference type="InterPro" id="IPR003593">
    <property type="entry name" value="AAA+_ATPase"/>
</dbReference>
<dbReference type="InterPro" id="IPR011527">
    <property type="entry name" value="ABC1_TM_dom"/>
</dbReference>
<dbReference type="InterPro" id="IPR036640">
    <property type="entry name" value="ABC1_TM_sf"/>
</dbReference>
<dbReference type="InterPro" id="IPR003439">
    <property type="entry name" value="ABC_transporter-like_ATP-bd"/>
</dbReference>
<dbReference type="InterPro" id="IPR017871">
    <property type="entry name" value="ABC_transporter-like_CS"/>
</dbReference>
<dbReference type="InterPro" id="IPR027417">
    <property type="entry name" value="P-loop_NTPase"/>
</dbReference>
<dbReference type="InterPro" id="IPR039421">
    <property type="entry name" value="Type_1_exporter"/>
</dbReference>
<dbReference type="PANTHER" id="PTHR24222">
    <property type="entry name" value="ABC TRANSPORTER B FAMILY"/>
    <property type="match status" value="1"/>
</dbReference>
<dbReference type="PANTHER" id="PTHR24222:SF50">
    <property type="entry name" value="ABC TRANSPORTER B FAMILY MEMBER 9-LIKE ISOFORM X2"/>
    <property type="match status" value="1"/>
</dbReference>
<dbReference type="Pfam" id="PF00664">
    <property type="entry name" value="ABC_membrane"/>
    <property type="match status" value="2"/>
</dbReference>
<dbReference type="Pfam" id="PF00005">
    <property type="entry name" value="ABC_tran"/>
    <property type="match status" value="2"/>
</dbReference>
<dbReference type="SMART" id="SM00382">
    <property type="entry name" value="AAA"/>
    <property type="match status" value="2"/>
</dbReference>
<dbReference type="SUPFAM" id="SSF90123">
    <property type="entry name" value="ABC transporter transmembrane region"/>
    <property type="match status" value="2"/>
</dbReference>
<dbReference type="SUPFAM" id="SSF52540">
    <property type="entry name" value="P-loop containing nucleoside triphosphate hydrolases"/>
    <property type="match status" value="2"/>
</dbReference>
<dbReference type="PROSITE" id="PS50929">
    <property type="entry name" value="ABC_TM1F"/>
    <property type="match status" value="2"/>
</dbReference>
<dbReference type="PROSITE" id="PS00211">
    <property type="entry name" value="ABC_TRANSPORTER_1"/>
    <property type="match status" value="2"/>
</dbReference>
<dbReference type="PROSITE" id="PS50893">
    <property type="entry name" value="ABC_TRANSPORTER_2"/>
    <property type="match status" value="2"/>
</dbReference>
<organism>
    <name type="scientific">Arabidopsis thaliana</name>
    <name type="common">Mouse-ear cress</name>
    <dbReference type="NCBI Taxonomy" id="3702"/>
    <lineage>
        <taxon>Eukaryota</taxon>
        <taxon>Viridiplantae</taxon>
        <taxon>Streptophyta</taxon>
        <taxon>Embryophyta</taxon>
        <taxon>Tracheophyta</taxon>
        <taxon>Spermatophyta</taxon>
        <taxon>Magnoliopsida</taxon>
        <taxon>eudicotyledons</taxon>
        <taxon>Gunneridae</taxon>
        <taxon>Pentapetalae</taxon>
        <taxon>rosids</taxon>
        <taxon>malvids</taxon>
        <taxon>Brassicales</taxon>
        <taxon>Brassicaceae</taxon>
        <taxon>Camelineae</taxon>
        <taxon>Arabidopsis</taxon>
    </lineage>
</organism>
<comment type="subcellular location">
    <subcellularLocation>
        <location evidence="3">Membrane</location>
        <topology evidence="3">Multi-pass membrane protein</topology>
    </subcellularLocation>
</comment>
<comment type="similarity">
    <text evidence="5">Belongs to the ABC transporter superfamily. ABCB family. Multidrug resistance exporter (TC 3.A.1.201) subfamily.</text>
</comment>
<comment type="sequence caution" evidence="5">
    <conflict type="erroneous gene model prediction">
        <sequence resource="EMBL-CDS" id="CAB53646"/>
    </conflict>
</comment>
<comment type="sequence caution" evidence="5">
    <conflict type="frameshift">
        <sequence resource="EMBL-CDS" id="CAB53646"/>
    </conflict>
</comment>
<comment type="sequence caution" evidence="5">
    <conflict type="erroneous gene model prediction">
        <sequence resource="EMBL-CDS" id="CAB78807"/>
    </conflict>
</comment>
<comment type="sequence caution" evidence="5">
    <conflict type="frameshift">
        <sequence resource="EMBL-CDS" id="CAB78807"/>
    </conflict>
</comment>
<name>AB9B_ARATH</name>